<reference key="1">
    <citation type="journal article" date="2007" name="BMC Microbiol.">
        <title>Subtle genetic changes enhance virulence of methicillin resistant and sensitive Staphylococcus aureus.</title>
        <authorList>
            <person name="Highlander S.K."/>
            <person name="Hulten K.G."/>
            <person name="Qin X."/>
            <person name="Jiang H."/>
            <person name="Yerrapragada S."/>
            <person name="Mason E.O. Jr."/>
            <person name="Shang Y."/>
            <person name="Williams T.M."/>
            <person name="Fortunov R.M."/>
            <person name="Liu Y."/>
            <person name="Igboeli O."/>
            <person name="Petrosino J."/>
            <person name="Tirumalai M."/>
            <person name="Uzman A."/>
            <person name="Fox G.E."/>
            <person name="Cardenas A.M."/>
            <person name="Muzny D.M."/>
            <person name="Hemphill L."/>
            <person name="Ding Y."/>
            <person name="Dugan S."/>
            <person name="Blyth P.R."/>
            <person name="Buhay C.J."/>
            <person name="Dinh H.H."/>
            <person name="Hawes A.C."/>
            <person name="Holder M."/>
            <person name="Kovar C.L."/>
            <person name="Lee S.L."/>
            <person name="Liu W."/>
            <person name="Nazareth L.V."/>
            <person name="Wang Q."/>
            <person name="Zhou J."/>
            <person name="Kaplan S.L."/>
            <person name="Weinstock G.M."/>
        </authorList>
    </citation>
    <scope>NUCLEOTIDE SEQUENCE [LARGE SCALE GENOMIC DNA]</scope>
    <source>
        <strain>USA300 / TCH1516</strain>
    </source>
</reference>
<proteinExistence type="inferred from homology"/>
<feature type="chain" id="PRO_1000084399" description="Glycerol-3-phosphate acyltransferase">
    <location>
        <begin position="1"/>
        <end position="202"/>
    </location>
</feature>
<feature type="transmembrane region" description="Helical" evidence="1">
    <location>
        <begin position="2"/>
        <end position="22"/>
    </location>
</feature>
<feature type="transmembrane region" description="Helical" evidence="1">
    <location>
        <begin position="54"/>
        <end position="74"/>
    </location>
</feature>
<feature type="transmembrane region" description="Helical" evidence="1">
    <location>
        <begin position="85"/>
        <end position="105"/>
    </location>
</feature>
<feature type="transmembrane region" description="Helical" evidence="1">
    <location>
        <begin position="120"/>
        <end position="140"/>
    </location>
</feature>
<feature type="transmembrane region" description="Helical" evidence="1">
    <location>
        <begin position="141"/>
        <end position="161"/>
    </location>
</feature>
<feature type="transmembrane region" description="Helical" evidence="1">
    <location>
        <begin position="162"/>
        <end position="182"/>
    </location>
</feature>
<name>PLSY_STAAT</name>
<evidence type="ECO:0000255" key="1">
    <source>
        <dbReference type="HAMAP-Rule" id="MF_01043"/>
    </source>
</evidence>
<keyword id="KW-1003">Cell membrane</keyword>
<keyword id="KW-0444">Lipid biosynthesis</keyword>
<keyword id="KW-0443">Lipid metabolism</keyword>
<keyword id="KW-0472">Membrane</keyword>
<keyword id="KW-0594">Phospholipid biosynthesis</keyword>
<keyword id="KW-1208">Phospholipid metabolism</keyword>
<keyword id="KW-0808">Transferase</keyword>
<keyword id="KW-0812">Transmembrane</keyword>
<keyword id="KW-1133">Transmembrane helix</keyword>
<comment type="function">
    <text evidence="1">Catalyzes the transfer of an acyl group from acyl-phosphate (acyl-PO(4)) to glycerol-3-phosphate (G3P) to form lysophosphatidic acid (LPA). This enzyme utilizes acyl-phosphate as fatty acyl donor, but not acyl-CoA or acyl-ACP.</text>
</comment>
<comment type="catalytic activity">
    <reaction evidence="1">
        <text>an acyl phosphate + sn-glycerol 3-phosphate = a 1-acyl-sn-glycero-3-phosphate + phosphate</text>
        <dbReference type="Rhea" id="RHEA:34075"/>
        <dbReference type="ChEBI" id="CHEBI:43474"/>
        <dbReference type="ChEBI" id="CHEBI:57597"/>
        <dbReference type="ChEBI" id="CHEBI:57970"/>
        <dbReference type="ChEBI" id="CHEBI:59918"/>
        <dbReference type="EC" id="2.3.1.275"/>
    </reaction>
</comment>
<comment type="pathway">
    <text evidence="1">Lipid metabolism; phospholipid metabolism.</text>
</comment>
<comment type="subunit">
    <text evidence="1">Probably interacts with PlsX.</text>
</comment>
<comment type="subcellular location">
    <subcellularLocation>
        <location evidence="1">Cell membrane</location>
        <topology evidence="1">Multi-pass membrane protein</topology>
    </subcellularLocation>
</comment>
<comment type="similarity">
    <text evidence="1">Belongs to the PlsY family.</text>
</comment>
<gene>
    <name evidence="1" type="primary">plsY</name>
    <name type="ordered locus">USA300HOU_1286</name>
</gene>
<sequence>MMIIVMLLLSYLIGAFPSGFVIGKLFFKKDIRQFGSGNTGATNSFRVLGRPAGFLVTFLDIFKGFITVFFPLWLQVHADGPISTFFTNGLIVGLFAILGHVYPVYLKFQGGKAVATSAGVVLGVNPILLLILAIIFFIVLKIFKYVSLASIVAAICCVIGSLIIQDYILLVVSFLVSIILIIRHRSNIARIFRGEEPKIKWM</sequence>
<protein>
    <recommendedName>
        <fullName evidence="1">Glycerol-3-phosphate acyltransferase</fullName>
    </recommendedName>
    <alternativeName>
        <fullName evidence="1">Acyl-PO4 G3P acyltransferase</fullName>
    </alternativeName>
    <alternativeName>
        <fullName evidence="1">Acyl-phosphate--glycerol-3-phosphate acyltransferase</fullName>
    </alternativeName>
    <alternativeName>
        <fullName evidence="1">G3P acyltransferase</fullName>
        <shortName evidence="1">GPAT</shortName>
        <ecNumber evidence="1">2.3.1.275</ecNumber>
    </alternativeName>
    <alternativeName>
        <fullName evidence="1">Lysophosphatidic acid synthase</fullName>
        <shortName evidence="1">LPA synthase</shortName>
    </alternativeName>
</protein>
<dbReference type="EC" id="2.3.1.275" evidence="1"/>
<dbReference type="EMBL" id="CP000730">
    <property type="protein sequence ID" value="ABX29298.1"/>
    <property type="molecule type" value="Genomic_DNA"/>
</dbReference>
<dbReference type="RefSeq" id="WP_000972781.1">
    <property type="nucleotide sequence ID" value="NC_010079.1"/>
</dbReference>
<dbReference type="SMR" id="A8Z223"/>
<dbReference type="KEGG" id="sax:USA300HOU_1286"/>
<dbReference type="HOGENOM" id="CLU_081254_4_0_9"/>
<dbReference type="UniPathway" id="UPA00085"/>
<dbReference type="GO" id="GO:0005886">
    <property type="term" value="C:plasma membrane"/>
    <property type="evidence" value="ECO:0007669"/>
    <property type="project" value="UniProtKB-SubCell"/>
</dbReference>
<dbReference type="GO" id="GO:0043772">
    <property type="term" value="F:acyl-phosphate glycerol-3-phosphate acyltransferase activity"/>
    <property type="evidence" value="ECO:0007669"/>
    <property type="project" value="UniProtKB-UniRule"/>
</dbReference>
<dbReference type="GO" id="GO:0008654">
    <property type="term" value="P:phospholipid biosynthetic process"/>
    <property type="evidence" value="ECO:0007669"/>
    <property type="project" value="UniProtKB-UniRule"/>
</dbReference>
<dbReference type="HAMAP" id="MF_01043">
    <property type="entry name" value="PlsY"/>
    <property type="match status" value="1"/>
</dbReference>
<dbReference type="InterPro" id="IPR003811">
    <property type="entry name" value="G3P_acylTferase_PlsY"/>
</dbReference>
<dbReference type="NCBIfam" id="TIGR00023">
    <property type="entry name" value="glycerol-3-phosphate 1-O-acyltransferase PlsY"/>
    <property type="match status" value="1"/>
</dbReference>
<dbReference type="PANTHER" id="PTHR30309:SF0">
    <property type="entry name" value="GLYCEROL-3-PHOSPHATE ACYLTRANSFERASE-RELATED"/>
    <property type="match status" value="1"/>
</dbReference>
<dbReference type="PANTHER" id="PTHR30309">
    <property type="entry name" value="INNER MEMBRANE PROTEIN YGIH"/>
    <property type="match status" value="1"/>
</dbReference>
<dbReference type="Pfam" id="PF02660">
    <property type="entry name" value="G3P_acyltransf"/>
    <property type="match status" value="1"/>
</dbReference>
<dbReference type="SMART" id="SM01207">
    <property type="entry name" value="G3P_acyltransf"/>
    <property type="match status" value="1"/>
</dbReference>
<accession>A8Z223</accession>
<organism>
    <name type="scientific">Staphylococcus aureus (strain USA300 / TCH1516)</name>
    <dbReference type="NCBI Taxonomy" id="451516"/>
    <lineage>
        <taxon>Bacteria</taxon>
        <taxon>Bacillati</taxon>
        <taxon>Bacillota</taxon>
        <taxon>Bacilli</taxon>
        <taxon>Bacillales</taxon>
        <taxon>Staphylococcaceae</taxon>
        <taxon>Staphylococcus</taxon>
    </lineage>
</organism>